<gene>
    <name type="primary">Prelid2</name>
</gene>
<name>PRLD2_MOUSE</name>
<keyword id="KW-1185">Reference proteome</keyword>
<protein>
    <recommendedName>
        <fullName>PRELI domain-containing protein 2</fullName>
    </recommendedName>
</protein>
<evidence type="ECO:0000255" key="1">
    <source>
        <dbReference type="PROSITE-ProRule" id="PRU00158"/>
    </source>
</evidence>
<feature type="chain" id="PRO_0000307774" description="PRELI domain-containing protein 2">
    <location>
        <begin position="1"/>
        <end position="177"/>
    </location>
</feature>
<feature type="domain" description="PRELI/MSF1" evidence="1">
    <location>
        <begin position="1"/>
        <end position="175"/>
    </location>
</feature>
<sequence>MGVTVDVHQVFQYPFEQVVACFLRKYPNPMDKNVISVKTVEEKKDESTGLIYRKRIAICQNVVPEILRKVSILKVPDIQLEEESWLSLQKRNMAIRSHCLTWTQYASMREESVFRESVENPNWTEFIQTGRISITGAGFLNCILETFASTFLRQGAQKGIRIMEMLLKEQCGSPLVE</sequence>
<accession>Q0VBB0</accession>
<accession>Q9CRD8</accession>
<organism>
    <name type="scientific">Mus musculus</name>
    <name type="common">Mouse</name>
    <dbReference type="NCBI Taxonomy" id="10090"/>
    <lineage>
        <taxon>Eukaryota</taxon>
        <taxon>Metazoa</taxon>
        <taxon>Chordata</taxon>
        <taxon>Craniata</taxon>
        <taxon>Vertebrata</taxon>
        <taxon>Euteleostomi</taxon>
        <taxon>Mammalia</taxon>
        <taxon>Eutheria</taxon>
        <taxon>Euarchontoglires</taxon>
        <taxon>Glires</taxon>
        <taxon>Rodentia</taxon>
        <taxon>Myomorpha</taxon>
        <taxon>Muroidea</taxon>
        <taxon>Muridae</taxon>
        <taxon>Murinae</taxon>
        <taxon>Mus</taxon>
        <taxon>Mus</taxon>
    </lineage>
</organism>
<dbReference type="EMBL" id="BC119251">
    <property type="protein sequence ID" value="AAI19252.1"/>
    <property type="molecule type" value="mRNA"/>
</dbReference>
<dbReference type="EMBL" id="BC120711">
    <property type="protein sequence ID" value="AAI20712.1"/>
    <property type="molecule type" value="mRNA"/>
</dbReference>
<dbReference type="EMBL" id="AK021193">
    <property type="protein sequence ID" value="BAB32324.1"/>
    <property type="molecule type" value="mRNA"/>
</dbReference>
<dbReference type="CCDS" id="CCDS37794.1"/>
<dbReference type="RefSeq" id="NP_084218.1">
    <property type="nucleotide sequence ID" value="NM_029942.1"/>
</dbReference>
<dbReference type="SMR" id="Q0VBB0"/>
<dbReference type="FunCoup" id="Q0VBB0">
    <property type="interactions" value="389"/>
</dbReference>
<dbReference type="STRING" id="10090.ENSMUSP00000157706"/>
<dbReference type="PhosphoSitePlus" id="Q0VBB0"/>
<dbReference type="SwissPalm" id="Q0VBB0"/>
<dbReference type="PaxDb" id="10090-ENSMUSP00000064661"/>
<dbReference type="ProteomicsDB" id="289842"/>
<dbReference type="Antibodypedia" id="27490">
    <property type="antibodies" value="93 antibodies from 15 providers"/>
</dbReference>
<dbReference type="DNASU" id="77619"/>
<dbReference type="Ensembl" id="ENSMUST00000235606.2">
    <property type="protein sequence ID" value="ENSMUSP00000157706.2"/>
    <property type="gene ID" value="ENSMUSG00000056671.8"/>
</dbReference>
<dbReference type="GeneID" id="77619"/>
<dbReference type="KEGG" id="mmu:77619"/>
<dbReference type="UCSC" id="uc008eti.1">
    <property type="organism name" value="mouse"/>
</dbReference>
<dbReference type="AGR" id="MGI:1924869"/>
<dbReference type="CTD" id="153768"/>
<dbReference type="MGI" id="MGI:1924869">
    <property type="gene designation" value="Prelid2"/>
</dbReference>
<dbReference type="VEuPathDB" id="HostDB:ENSMUSG00000056671"/>
<dbReference type="eggNOG" id="ENOG502RYVE">
    <property type="taxonomic scope" value="Eukaryota"/>
</dbReference>
<dbReference type="GeneTree" id="ENSGT00950000182810"/>
<dbReference type="HOGENOM" id="CLU_067902_6_0_1"/>
<dbReference type="InParanoid" id="Q0VBB0"/>
<dbReference type="OMA" id="CRNVVPE"/>
<dbReference type="OrthoDB" id="407630at2759"/>
<dbReference type="PhylomeDB" id="Q0VBB0"/>
<dbReference type="TreeFam" id="TF337953"/>
<dbReference type="BioGRID-ORCS" id="77619">
    <property type="hits" value="1 hit in 77 CRISPR screens"/>
</dbReference>
<dbReference type="ChiTaRS" id="Prelid2">
    <property type="organism name" value="mouse"/>
</dbReference>
<dbReference type="PRO" id="PR:Q0VBB0"/>
<dbReference type="Proteomes" id="UP000000589">
    <property type="component" value="Chromosome 18"/>
</dbReference>
<dbReference type="RNAct" id="Q0VBB0">
    <property type="molecule type" value="protein"/>
</dbReference>
<dbReference type="Bgee" id="ENSMUSG00000056671">
    <property type="expression patterns" value="Expressed in blastoderm cell in morula and 149 other cell types or tissues"/>
</dbReference>
<dbReference type="ExpressionAtlas" id="Q0VBB0">
    <property type="expression patterns" value="baseline and differential"/>
</dbReference>
<dbReference type="GO" id="GO:0005758">
    <property type="term" value="C:mitochondrial intermembrane space"/>
    <property type="evidence" value="ECO:0007669"/>
    <property type="project" value="InterPro"/>
</dbReference>
<dbReference type="GO" id="GO:0005739">
    <property type="term" value="C:mitochondrion"/>
    <property type="evidence" value="ECO:0007005"/>
    <property type="project" value="MGI"/>
</dbReference>
<dbReference type="InterPro" id="IPR006797">
    <property type="entry name" value="PRELI/MSF1_dom"/>
</dbReference>
<dbReference type="InterPro" id="IPR037365">
    <property type="entry name" value="Slowmo/Ups"/>
</dbReference>
<dbReference type="PANTHER" id="PTHR11158">
    <property type="entry name" value="MSF1/PX19 RELATED"/>
    <property type="match status" value="1"/>
</dbReference>
<dbReference type="Pfam" id="PF04707">
    <property type="entry name" value="PRELI"/>
    <property type="match status" value="1"/>
</dbReference>
<dbReference type="PROSITE" id="PS50904">
    <property type="entry name" value="PRELI_MSF1"/>
    <property type="match status" value="1"/>
</dbReference>
<reference key="1">
    <citation type="journal article" date="2004" name="Genome Res.">
        <title>The status, quality, and expansion of the NIH full-length cDNA project: the Mammalian Gene Collection (MGC).</title>
        <authorList>
            <consortium name="The MGC Project Team"/>
        </authorList>
    </citation>
    <scope>NUCLEOTIDE SEQUENCE [LARGE SCALE MRNA]</scope>
    <source>
        <tissue>Brain</tissue>
    </source>
</reference>
<reference key="2">
    <citation type="journal article" date="2005" name="Science">
        <title>The transcriptional landscape of the mammalian genome.</title>
        <authorList>
            <person name="Carninci P."/>
            <person name="Kasukawa T."/>
            <person name="Katayama S."/>
            <person name="Gough J."/>
            <person name="Frith M.C."/>
            <person name="Maeda N."/>
            <person name="Oyama R."/>
            <person name="Ravasi T."/>
            <person name="Lenhard B."/>
            <person name="Wells C."/>
            <person name="Kodzius R."/>
            <person name="Shimokawa K."/>
            <person name="Bajic V.B."/>
            <person name="Brenner S.E."/>
            <person name="Batalov S."/>
            <person name="Forrest A.R."/>
            <person name="Zavolan M."/>
            <person name="Davis M.J."/>
            <person name="Wilming L.G."/>
            <person name="Aidinis V."/>
            <person name="Allen J.E."/>
            <person name="Ambesi-Impiombato A."/>
            <person name="Apweiler R."/>
            <person name="Aturaliya R.N."/>
            <person name="Bailey T.L."/>
            <person name="Bansal M."/>
            <person name="Baxter L."/>
            <person name="Beisel K.W."/>
            <person name="Bersano T."/>
            <person name="Bono H."/>
            <person name="Chalk A.M."/>
            <person name="Chiu K.P."/>
            <person name="Choudhary V."/>
            <person name="Christoffels A."/>
            <person name="Clutterbuck D.R."/>
            <person name="Crowe M.L."/>
            <person name="Dalla E."/>
            <person name="Dalrymple B.P."/>
            <person name="de Bono B."/>
            <person name="Della Gatta G."/>
            <person name="di Bernardo D."/>
            <person name="Down T."/>
            <person name="Engstrom P."/>
            <person name="Fagiolini M."/>
            <person name="Faulkner G."/>
            <person name="Fletcher C.F."/>
            <person name="Fukushima T."/>
            <person name="Furuno M."/>
            <person name="Futaki S."/>
            <person name="Gariboldi M."/>
            <person name="Georgii-Hemming P."/>
            <person name="Gingeras T.R."/>
            <person name="Gojobori T."/>
            <person name="Green R.E."/>
            <person name="Gustincich S."/>
            <person name="Harbers M."/>
            <person name="Hayashi Y."/>
            <person name="Hensch T.K."/>
            <person name="Hirokawa N."/>
            <person name="Hill D."/>
            <person name="Huminiecki L."/>
            <person name="Iacono M."/>
            <person name="Ikeo K."/>
            <person name="Iwama A."/>
            <person name="Ishikawa T."/>
            <person name="Jakt M."/>
            <person name="Kanapin A."/>
            <person name="Katoh M."/>
            <person name="Kawasawa Y."/>
            <person name="Kelso J."/>
            <person name="Kitamura H."/>
            <person name="Kitano H."/>
            <person name="Kollias G."/>
            <person name="Krishnan S.P."/>
            <person name="Kruger A."/>
            <person name="Kummerfeld S.K."/>
            <person name="Kurochkin I.V."/>
            <person name="Lareau L.F."/>
            <person name="Lazarevic D."/>
            <person name="Lipovich L."/>
            <person name="Liu J."/>
            <person name="Liuni S."/>
            <person name="McWilliam S."/>
            <person name="Madan Babu M."/>
            <person name="Madera M."/>
            <person name="Marchionni L."/>
            <person name="Matsuda H."/>
            <person name="Matsuzawa S."/>
            <person name="Miki H."/>
            <person name="Mignone F."/>
            <person name="Miyake S."/>
            <person name="Morris K."/>
            <person name="Mottagui-Tabar S."/>
            <person name="Mulder N."/>
            <person name="Nakano N."/>
            <person name="Nakauchi H."/>
            <person name="Ng P."/>
            <person name="Nilsson R."/>
            <person name="Nishiguchi S."/>
            <person name="Nishikawa S."/>
            <person name="Nori F."/>
            <person name="Ohara O."/>
            <person name="Okazaki Y."/>
            <person name="Orlando V."/>
            <person name="Pang K.C."/>
            <person name="Pavan W.J."/>
            <person name="Pavesi G."/>
            <person name="Pesole G."/>
            <person name="Petrovsky N."/>
            <person name="Piazza S."/>
            <person name="Reed J."/>
            <person name="Reid J.F."/>
            <person name="Ring B.Z."/>
            <person name="Ringwald M."/>
            <person name="Rost B."/>
            <person name="Ruan Y."/>
            <person name="Salzberg S.L."/>
            <person name="Sandelin A."/>
            <person name="Schneider C."/>
            <person name="Schoenbach C."/>
            <person name="Sekiguchi K."/>
            <person name="Semple C.A."/>
            <person name="Seno S."/>
            <person name="Sessa L."/>
            <person name="Sheng Y."/>
            <person name="Shibata Y."/>
            <person name="Shimada H."/>
            <person name="Shimada K."/>
            <person name="Silva D."/>
            <person name="Sinclair B."/>
            <person name="Sperling S."/>
            <person name="Stupka E."/>
            <person name="Sugiura K."/>
            <person name="Sultana R."/>
            <person name="Takenaka Y."/>
            <person name="Taki K."/>
            <person name="Tammoja K."/>
            <person name="Tan S.L."/>
            <person name="Tang S."/>
            <person name="Taylor M.S."/>
            <person name="Tegner J."/>
            <person name="Teichmann S.A."/>
            <person name="Ueda H.R."/>
            <person name="van Nimwegen E."/>
            <person name="Verardo R."/>
            <person name="Wei C.L."/>
            <person name="Yagi K."/>
            <person name="Yamanishi H."/>
            <person name="Zabarovsky E."/>
            <person name="Zhu S."/>
            <person name="Zimmer A."/>
            <person name="Hide W."/>
            <person name="Bult C."/>
            <person name="Grimmond S.M."/>
            <person name="Teasdale R.D."/>
            <person name="Liu E.T."/>
            <person name="Brusic V."/>
            <person name="Quackenbush J."/>
            <person name="Wahlestedt C."/>
            <person name="Mattick J.S."/>
            <person name="Hume D.A."/>
            <person name="Kai C."/>
            <person name="Sasaki D."/>
            <person name="Tomaru Y."/>
            <person name="Fukuda S."/>
            <person name="Kanamori-Katayama M."/>
            <person name="Suzuki M."/>
            <person name="Aoki J."/>
            <person name="Arakawa T."/>
            <person name="Iida J."/>
            <person name="Imamura K."/>
            <person name="Itoh M."/>
            <person name="Kato T."/>
            <person name="Kawaji H."/>
            <person name="Kawagashira N."/>
            <person name="Kawashima T."/>
            <person name="Kojima M."/>
            <person name="Kondo S."/>
            <person name="Konno H."/>
            <person name="Nakano K."/>
            <person name="Ninomiya N."/>
            <person name="Nishio T."/>
            <person name="Okada M."/>
            <person name="Plessy C."/>
            <person name="Shibata K."/>
            <person name="Shiraki T."/>
            <person name="Suzuki S."/>
            <person name="Tagami M."/>
            <person name="Waki K."/>
            <person name="Watahiki A."/>
            <person name="Okamura-Oho Y."/>
            <person name="Suzuki H."/>
            <person name="Kawai J."/>
            <person name="Hayashizaki Y."/>
        </authorList>
    </citation>
    <scope>NUCLEOTIDE SEQUENCE [LARGE SCALE MRNA] OF 1-176</scope>
    <source>
        <strain>C57BL/6J</strain>
    </source>
</reference>
<proteinExistence type="evidence at transcript level"/>